<keyword id="KW-0157">Chromophore</keyword>
<keyword id="KW-0600">Photoreceptor protein</keyword>
<keyword id="KW-0675">Receptor</keyword>
<keyword id="KW-0677">Repeat</keyword>
<keyword id="KW-0716">Sensory transduction</keyword>
<keyword id="KW-0804">Transcription</keyword>
<keyword id="KW-0805">Transcription regulation</keyword>
<sequence>MSSPLNNRGTCSRSSSARSRHSARVVAQTPVDAQLHAEFESSQRNFDYSSSVSAAIRPSVSTSTVSTYHQTMQRGLYIQPFGCLLAVHPDTFTLLAYSENAPEMLDLTPHAVPTIDQRDALAVGADVRTLFRSQSSVALHKAATFGEVNLLNPILVHARTSGKPFYAILHRIDVGLVIDLEPVNPVDVPVTAAGALKSYKLAAKAISRLQSLPSGNLSLLCDVLVREVSELTGYDRVMAYKFHEDEHGEVISECRRSDLEPYLGLHYPATDIPQASRFLFMKNKVRMICDCSATLVKIIQDDSLAQPLSLCGSTLRASHGCHAQYMANMGSVASLVMSVTISNDEEEDVDTGSDQQPKGRKLWGLVVCHHTSPRFVPFPLRYACEFLLQVFGIQLNKEVELAAQAKERHILRTQTLLWDMLLRDAPVGIFTQSPNVMDLVKCDGVALYYQNQLLLLGSTPSESEIKSIATWLQENHDGSTGLSTDSLVEAGYPGAAALREVVCGMAAIKISSKDFIFWFRSHTTKEIKWGGAKHEPVDADDNGRKMHPRSSFKAFLEVVKWRSVPWEDVEMDAIHSLQLILRGSLQDEDANRNNVRSIVKAPPDDTKKIQGLLELRTVTNEMVRLIETATAPVLAVDIAGNINGWNNKAAELTGLPVMEAIGRPLIDLVVVDSIEVVKRILDSALQGIEEQNLEIKLKAFHEQECNGPIILMVNSCCSRDLSEKVIGVCFVGQDLTTQKMIMDKYTRIQGDYVAIVKNPSELIPPIFMINDLGSCLEWNKAMQKITGIQREDVIDKLLIGEVFTLHDYGCRVKDHATLTKLSILMNAVISGQDPEKLLFGFFDTDGKYIESLLTVNKRINAEGKITGAICFLHVASPELQHALQVQKMSEQAATNSFKELTYIHQELRNPLNGMQFTCNLLEPSELTEEQRKLLSSNILCQDQLKKILHDTDLESIEQCYMEMNTVEFNLEEALNTVLMQGIPLGKEKRISIERDWPVEISRMYLYGDNLRLQQVLADYLACALQFTQPAEGPIVLQVIPKKENIGSGMQIAHLEFRIVHPAPGVPEALIQEMFRHNPEVSREGLGLYICQKLVKTMSGTVQYLREADTSSFIILIEFPVAQLSSKRSKPSTSKF</sequence>
<reference key="1">
    <citation type="journal article" date="1997" name="Plant Physiol.">
        <title>The Sorghum bicolor photoperiod sensitivity gene, Ma3, encodes a phytochrome B.</title>
        <authorList>
            <person name="Childs K.L."/>
            <person name="Miller F.R."/>
            <person name="Cordonnier-Pratt M.-M."/>
            <person name="Pratt L.H."/>
            <person name="Morgan P.W."/>
            <person name="Mullet J.E."/>
        </authorList>
    </citation>
    <scope>NUCLEOTIDE SEQUENCE [MRNA]</scope>
</reference>
<evidence type="ECO:0000250" key="1"/>
<evidence type="ECO:0000255" key="2">
    <source>
        <dbReference type="PROSITE-ProRule" id="PRU00107"/>
    </source>
</evidence>
<evidence type="ECO:0000255" key="3">
    <source>
        <dbReference type="PROSITE-ProRule" id="PRU00140"/>
    </source>
</evidence>
<evidence type="ECO:0000256" key="4">
    <source>
        <dbReference type="SAM" id="MobiDB-lite"/>
    </source>
</evidence>
<evidence type="ECO:0000305" key="5"/>
<accession>P93528</accession>
<dbReference type="EMBL" id="U56731">
    <property type="protein sequence ID" value="AAB41399.1"/>
    <property type="molecule type" value="mRNA"/>
</dbReference>
<dbReference type="PIR" id="T14803">
    <property type="entry name" value="T14803"/>
</dbReference>
<dbReference type="SMR" id="P93528"/>
<dbReference type="eggNOG" id="ENOG502QT1B">
    <property type="taxonomic scope" value="Eukaryota"/>
</dbReference>
<dbReference type="ExpressionAtlas" id="P93528">
    <property type="expression patterns" value="baseline"/>
</dbReference>
<dbReference type="GO" id="GO:0000155">
    <property type="term" value="F:phosphorelay sensor kinase activity"/>
    <property type="evidence" value="ECO:0007669"/>
    <property type="project" value="InterPro"/>
</dbReference>
<dbReference type="GO" id="GO:0009881">
    <property type="term" value="F:photoreceptor activity"/>
    <property type="evidence" value="ECO:0007669"/>
    <property type="project" value="UniProtKB-KW"/>
</dbReference>
<dbReference type="GO" id="GO:0042803">
    <property type="term" value="F:protein homodimerization activity"/>
    <property type="evidence" value="ECO:0007669"/>
    <property type="project" value="InterPro"/>
</dbReference>
<dbReference type="GO" id="GO:0009584">
    <property type="term" value="P:detection of visible light"/>
    <property type="evidence" value="ECO:0007669"/>
    <property type="project" value="InterPro"/>
</dbReference>
<dbReference type="GO" id="GO:0009585">
    <property type="term" value="P:red, far-red light phototransduction"/>
    <property type="evidence" value="ECO:0007669"/>
    <property type="project" value="InterPro"/>
</dbReference>
<dbReference type="GO" id="GO:0006355">
    <property type="term" value="P:regulation of DNA-templated transcription"/>
    <property type="evidence" value="ECO:0007669"/>
    <property type="project" value="InterPro"/>
</dbReference>
<dbReference type="CDD" id="cd16932">
    <property type="entry name" value="HATPase_Phy-like"/>
    <property type="match status" value="1"/>
</dbReference>
<dbReference type="CDD" id="cd00082">
    <property type="entry name" value="HisKA"/>
    <property type="match status" value="1"/>
</dbReference>
<dbReference type="CDD" id="cd00130">
    <property type="entry name" value="PAS"/>
    <property type="match status" value="2"/>
</dbReference>
<dbReference type="FunFam" id="3.30.450.20:FF:000034">
    <property type="entry name" value="Phytochrome"/>
    <property type="match status" value="1"/>
</dbReference>
<dbReference type="FunFam" id="3.30.450.20:FF:000039">
    <property type="entry name" value="Phytochrome"/>
    <property type="match status" value="1"/>
</dbReference>
<dbReference type="FunFam" id="3.30.450.270:FF:000001">
    <property type="entry name" value="Phytochrome"/>
    <property type="match status" value="1"/>
</dbReference>
<dbReference type="FunFam" id="3.30.565.10:FF:000064">
    <property type="entry name" value="Phytochrome"/>
    <property type="match status" value="1"/>
</dbReference>
<dbReference type="Gene3D" id="3.30.450.270">
    <property type="match status" value="1"/>
</dbReference>
<dbReference type="Gene3D" id="3.30.450.40">
    <property type="match status" value="1"/>
</dbReference>
<dbReference type="Gene3D" id="3.30.565.10">
    <property type="entry name" value="Histidine kinase-like ATPase, C-terminal domain"/>
    <property type="match status" value="1"/>
</dbReference>
<dbReference type="Gene3D" id="3.30.450.20">
    <property type="entry name" value="PAS domain"/>
    <property type="match status" value="3"/>
</dbReference>
<dbReference type="InterPro" id="IPR003018">
    <property type="entry name" value="GAF"/>
</dbReference>
<dbReference type="InterPro" id="IPR029016">
    <property type="entry name" value="GAF-like_dom_sf"/>
</dbReference>
<dbReference type="InterPro" id="IPR036890">
    <property type="entry name" value="HATPase_C_sf"/>
</dbReference>
<dbReference type="InterPro" id="IPR005467">
    <property type="entry name" value="His_kinase_dom"/>
</dbReference>
<dbReference type="InterPro" id="IPR003661">
    <property type="entry name" value="HisK_dim/P_dom"/>
</dbReference>
<dbReference type="InterPro" id="IPR000014">
    <property type="entry name" value="PAS"/>
</dbReference>
<dbReference type="InterPro" id="IPR035965">
    <property type="entry name" value="PAS-like_dom_sf"/>
</dbReference>
<dbReference type="InterPro" id="IPR013654">
    <property type="entry name" value="PAS_2"/>
</dbReference>
<dbReference type="InterPro" id="IPR013767">
    <property type="entry name" value="PAS_fold"/>
</dbReference>
<dbReference type="InterPro" id="IPR044767">
    <property type="entry name" value="Phy_HATPase-like"/>
</dbReference>
<dbReference type="InterPro" id="IPR016132">
    <property type="entry name" value="Phyto_chromo_attachment"/>
</dbReference>
<dbReference type="InterPro" id="IPR001294">
    <property type="entry name" value="Phytochrome"/>
</dbReference>
<dbReference type="InterPro" id="IPR012129">
    <property type="entry name" value="Phytochrome_A-E"/>
</dbReference>
<dbReference type="InterPro" id="IPR013515">
    <property type="entry name" value="Phytochrome_cen-reg"/>
</dbReference>
<dbReference type="InterPro" id="IPR043150">
    <property type="entry name" value="Phytochrome_PHY_sf"/>
</dbReference>
<dbReference type="NCBIfam" id="TIGR00229">
    <property type="entry name" value="sensory_box"/>
    <property type="match status" value="1"/>
</dbReference>
<dbReference type="PANTHER" id="PTHR47876">
    <property type="entry name" value="OS08G0260000 PROTEIN"/>
    <property type="match status" value="1"/>
</dbReference>
<dbReference type="PANTHER" id="PTHR47876:SF3">
    <property type="entry name" value="PHYTOCHROME 1"/>
    <property type="match status" value="1"/>
</dbReference>
<dbReference type="Pfam" id="PF01590">
    <property type="entry name" value="GAF"/>
    <property type="match status" value="1"/>
</dbReference>
<dbReference type="Pfam" id="PF02518">
    <property type="entry name" value="HATPase_c"/>
    <property type="match status" value="1"/>
</dbReference>
<dbReference type="Pfam" id="PF00512">
    <property type="entry name" value="HisKA"/>
    <property type="match status" value="1"/>
</dbReference>
<dbReference type="Pfam" id="PF00989">
    <property type="entry name" value="PAS"/>
    <property type="match status" value="2"/>
</dbReference>
<dbReference type="Pfam" id="PF08446">
    <property type="entry name" value="PAS_2"/>
    <property type="match status" value="1"/>
</dbReference>
<dbReference type="Pfam" id="PF00360">
    <property type="entry name" value="PHY"/>
    <property type="match status" value="1"/>
</dbReference>
<dbReference type="PIRSF" id="PIRSF000084">
    <property type="entry name" value="Phytochrome"/>
    <property type="match status" value="1"/>
</dbReference>
<dbReference type="PRINTS" id="PR01033">
    <property type="entry name" value="PHYTOCHROME"/>
</dbReference>
<dbReference type="SMART" id="SM00065">
    <property type="entry name" value="GAF"/>
    <property type="match status" value="1"/>
</dbReference>
<dbReference type="SMART" id="SM00387">
    <property type="entry name" value="HATPase_c"/>
    <property type="match status" value="1"/>
</dbReference>
<dbReference type="SMART" id="SM00388">
    <property type="entry name" value="HisKA"/>
    <property type="match status" value="1"/>
</dbReference>
<dbReference type="SMART" id="SM00091">
    <property type="entry name" value="PAS"/>
    <property type="match status" value="2"/>
</dbReference>
<dbReference type="SUPFAM" id="SSF55874">
    <property type="entry name" value="ATPase domain of HSP90 chaperone/DNA topoisomerase II/histidine kinase"/>
    <property type="match status" value="1"/>
</dbReference>
<dbReference type="SUPFAM" id="SSF55781">
    <property type="entry name" value="GAF domain-like"/>
    <property type="match status" value="2"/>
</dbReference>
<dbReference type="SUPFAM" id="SSF55785">
    <property type="entry name" value="PYP-like sensor domain (PAS domain)"/>
    <property type="match status" value="3"/>
</dbReference>
<dbReference type="PROSITE" id="PS50109">
    <property type="entry name" value="HIS_KIN"/>
    <property type="match status" value="1"/>
</dbReference>
<dbReference type="PROSITE" id="PS50112">
    <property type="entry name" value="PAS"/>
    <property type="match status" value="2"/>
</dbReference>
<dbReference type="PROSITE" id="PS50046">
    <property type="entry name" value="PHYTOCHROME_2"/>
    <property type="match status" value="1"/>
</dbReference>
<protein>
    <recommendedName>
        <fullName>Phytochrome C</fullName>
    </recommendedName>
</protein>
<gene>
    <name type="primary">PHYC</name>
</gene>
<proteinExistence type="evidence at transcript level"/>
<comment type="function">
    <text evidence="1">Regulatory photoreceptor which exists in two forms that are reversibly interconvertible by light: the Pr form that absorbs maximally in the red region of the spectrum and the Pfr form that absorbs maximally in the far-red region. Photoconversion of Pr to Pfr induces an array of morphogenic responses, whereas reconversion of Pfr to Pr cancels the induction of those responses. Pfr controls the expression of a number of nuclear genes including those encoding the small subunit of ribulose-bisphosphate carboxylase, chlorophyll A/B binding protein, protochlorophyllide reductase, rRNA, etc. It also controls the expression of its own gene(s) in a negative feedback fashion (By similarity).</text>
</comment>
<comment type="subunit">
    <text evidence="1">Homodimer.</text>
</comment>
<comment type="PTM">
    <text evidence="1">Contains one covalently linked phytochromobilin chromophore.</text>
</comment>
<comment type="similarity">
    <text evidence="5">Belongs to the phytochrome family.</text>
</comment>
<name>PHYC_SORBI</name>
<feature type="chain" id="PRO_0000171989" description="Phytochrome C">
    <location>
        <begin position="1"/>
        <end position="1135"/>
    </location>
</feature>
<feature type="domain" description="GAF">
    <location>
        <begin position="216"/>
        <end position="399"/>
    </location>
</feature>
<feature type="domain" description="PAS 1" evidence="3">
    <location>
        <begin position="618"/>
        <end position="688"/>
    </location>
</feature>
<feature type="domain" description="PAS 2" evidence="3">
    <location>
        <begin position="748"/>
        <end position="822"/>
    </location>
</feature>
<feature type="domain" description="Histidine kinase" evidence="2">
    <location>
        <begin position="902"/>
        <end position="1122"/>
    </location>
</feature>
<feature type="region of interest" description="Disordered" evidence="4">
    <location>
        <begin position="1"/>
        <end position="26"/>
    </location>
</feature>
<feature type="compositionally biased region" description="Polar residues" evidence="4">
    <location>
        <begin position="1"/>
        <end position="11"/>
    </location>
</feature>
<feature type="binding site" description="covalent" evidence="1">
    <location>
        <position position="321"/>
    </location>
    <ligand>
        <name>phytochromobilin</name>
        <dbReference type="ChEBI" id="CHEBI:189064"/>
    </ligand>
</feature>
<organism>
    <name type="scientific">Sorghum bicolor</name>
    <name type="common">Sorghum</name>
    <name type="synonym">Sorghum vulgare</name>
    <dbReference type="NCBI Taxonomy" id="4558"/>
    <lineage>
        <taxon>Eukaryota</taxon>
        <taxon>Viridiplantae</taxon>
        <taxon>Streptophyta</taxon>
        <taxon>Embryophyta</taxon>
        <taxon>Tracheophyta</taxon>
        <taxon>Spermatophyta</taxon>
        <taxon>Magnoliopsida</taxon>
        <taxon>Liliopsida</taxon>
        <taxon>Poales</taxon>
        <taxon>Poaceae</taxon>
        <taxon>PACMAD clade</taxon>
        <taxon>Panicoideae</taxon>
        <taxon>Andropogonodae</taxon>
        <taxon>Andropogoneae</taxon>
        <taxon>Sorghinae</taxon>
        <taxon>Sorghum</taxon>
    </lineage>
</organism>